<dbReference type="EC" id="2.7.7.6" evidence="1"/>
<dbReference type="EMBL" id="CP000948">
    <property type="protein sequence ID" value="ACB04990.1"/>
    <property type="molecule type" value="Genomic_DNA"/>
</dbReference>
<dbReference type="RefSeq" id="WP_000653944.1">
    <property type="nucleotide sequence ID" value="NC_010473.1"/>
</dbReference>
<dbReference type="SMR" id="B1XBZ0"/>
<dbReference type="GeneID" id="93777906"/>
<dbReference type="KEGG" id="ecd:ECDH10B_4176"/>
<dbReference type="HOGENOM" id="CLU_000524_3_1_6"/>
<dbReference type="GO" id="GO:0000428">
    <property type="term" value="C:DNA-directed RNA polymerase complex"/>
    <property type="evidence" value="ECO:0007669"/>
    <property type="project" value="UniProtKB-KW"/>
</dbReference>
<dbReference type="GO" id="GO:0003677">
    <property type="term" value="F:DNA binding"/>
    <property type="evidence" value="ECO:0007669"/>
    <property type="project" value="UniProtKB-UniRule"/>
</dbReference>
<dbReference type="GO" id="GO:0003899">
    <property type="term" value="F:DNA-directed RNA polymerase activity"/>
    <property type="evidence" value="ECO:0007669"/>
    <property type="project" value="UniProtKB-UniRule"/>
</dbReference>
<dbReference type="GO" id="GO:0000287">
    <property type="term" value="F:magnesium ion binding"/>
    <property type="evidence" value="ECO:0007669"/>
    <property type="project" value="UniProtKB-UniRule"/>
</dbReference>
<dbReference type="GO" id="GO:0008270">
    <property type="term" value="F:zinc ion binding"/>
    <property type="evidence" value="ECO:0007669"/>
    <property type="project" value="UniProtKB-UniRule"/>
</dbReference>
<dbReference type="GO" id="GO:0006351">
    <property type="term" value="P:DNA-templated transcription"/>
    <property type="evidence" value="ECO:0007669"/>
    <property type="project" value="UniProtKB-UniRule"/>
</dbReference>
<dbReference type="CDD" id="cd02655">
    <property type="entry name" value="RNAP_beta'_C"/>
    <property type="match status" value="1"/>
</dbReference>
<dbReference type="CDD" id="cd01609">
    <property type="entry name" value="RNAP_beta'_N"/>
    <property type="match status" value="1"/>
</dbReference>
<dbReference type="FunFam" id="1.10.132.30:FF:000003">
    <property type="entry name" value="DNA-directed RNA polymerase subunit beta"/>
    <property type="match status" value="1"/>
</dbReference>
<dbReference type="FunFam" id="1.10.150.390:FF:000002">
    <property type="entry name" value="DNA-directed RNA polymerase subunit beta"/>
    <property type="match status" value="1"/>
</dbReference>
<dbReference type="FunFam" id="1.10.274.100:FF:000002">
    <property type="entry name" value="DNA-directed RNA polymerase subunit beta"/>
    <property type="match status" value="1"/>
</dbReference>
<dbReference type="FunFam" id="1.10.40.90:FF:000001">
    <property type="entry name" value="DNA-directed RNA polymerase subunit beta"/>
    <property type="match status" value="1"/>
</dbReference>
<dbReference type="FunFam" id="2.40.50.100:FF:000012">
    <property type="entry name" value="DNA-directed RNA polymerase subunit beta"/>
    <property type="match status" value="1"/>
</dbReference>
<dbReference type="FunFam" id="2.40.50.100:FF:000016">
    <property type="entry name" value="DNA-directed RNA polymerase subunit beta"/>
    <property type="match status" value="1"/>
</dbReference>
<dbReference type="FunFam" id="2.40.50.100:FF:000019">
    <property type="entry name" value="DNA-directed RNA polymerase subunit beta"/>
    <property type="match status" value="1"/>
</dbReference>
<dbReference type="FunFam" id="4.10.860.120:FF:000001">
    <property type="entry name" value="DNA-directed RNA polymerase subunit beta"/>
    <property type="match status" value="1"/>
</dbReference>
<dbReference type="Gene3D" id="1.10.132.30">
    <property type="match status" value="1"/>
</dbReference>
<dbReference type="Gene3D" id="1.10.150.390">
    <property type="match status" value="1"/>
</dbReference>
<dbReference type="Gene3D" id="1.10.1790.20">
    <property type="match status" value="1"/>
</dbReference>
<dbReference type="Gene3D" id="1.10.40.90">
    <property type="match status" value="1"/>
</dbReference>
<dbReference type="Gene3D" id="2.40.40.20">
    <property type="match status" value="1"/>
</dbReference>
<dbReference type="Gene3D" id="2.40.50.100">
    <property type="match status" value="3"/>
</dbReference>
<dbReference type="Gene3D" id="4.10.860.120">
    <property type="entry name" value="RNA polymerase II, clamp domain"/>
    <property type="match status" value="1"/>
</dbReference>
<dbReference type="Gene3D" id="1.10.274.100">
    <property type="entry name" value="RNA polymerase Rpb1, domain 3"/>
    <property type="match status" value="1"/>
</dbReference>
<dbReference type="HAMAP" id="MF_01322">
    <property type="entry name" value="RNApol_bact_RpoC"/>
    <property type="match status" value="1"/>
</dbReference>
<dbReference type="InterPro" id="IPR045867">
    <property type="entry name" value="DNA-dir_RpoC_beta_prime"/>
</dbReference>
<dbReference type="InterPro" id="IPR012754">
    <property type="entry name" value="DNA-dir_RpoC_beta_prime_bact"/>
</dbReference>
<dbReference type="InterPro" id="IPR000722">
    <property type="entry name" value="RNA_pol_asu"/>
</dbReference>
<dbReference type="InterPro" id="IPR006592">
    <property type="entry name" value="RNA_pol_N"/>
</dbReference>
<dbReference type="InterPro" id="IPR007080">
    <property type="entry name" value="RNA_pol_Rpb1_1"/>
</dbReference>
<dbReference type="InterPro" id="IPR007066">
    <property type="entry name" value="RNA_pol_Rpb1_3"/>
</dbReference>
<dbReference type="InterPro" id="IPR042102">
    <property type="entry name" value="RNA_pol_Rpb1_3_sf"/>
</dbReference>
<dbReference type="InterPro" id="IPR007083">
    <property type="entry name" value="RNA_pol_Rpb1_4"/>
</dbReference>
<dbReference type="InterPro" id="IPR007081">
    <property type="entry name" value="RNA_pol_Rpb1_5"/>
</dbReference>
<dbReference type="InterPro" id="IPR044893">
    <property type="entry name" value="RNA_pol_Rpb1_clamp_domain"/>
</dbReference>
<dbReference type="InterPro" id="IPR038120">
    <property type="entry name" value="Rpb1_funnel_sf"/>
</dbReference>
<dbReference type="NCBIfam" id="TIGR02386">
    <property type="entry name" value="rpoC_TIGR"/>
    <property type="match status" value="1"/>
</dbReference>
<dbReference type="PANTHER" id="PTHR19376">
    <property type="entry name" value="DNA-DIRECTED RNA POLYMERASE"/>
    <property type="match status" value="1"/>
</dbReference>
<dbReference type="PANTHER" id="PTHR19376:SF54">
    <property type="entry name" value="DNA-DIRECTED RNA POLYMERASE SUBUNIT BETA"/>
    <property type="match status" value="1"/>
</dbReference>
<dbReference type="Pfam" id="PF04997">
    <property type="entry name" value="RNA_pol_Rpb1_1"/>
    <property type="match status" value="1"/>
</dbReference>
<dbReference type="Pfam" id="PF00623">
    <property type="entry name" value="RNA_pol_Rpb1_2"/>
    <property type="match status" value="2"/>
</dbReference>
<dbReference type="Pfam" id="PF04983">
    <property type="entry name" value="RNA_pol_Rpb1_3"/>
    <property type="match status" value="1"/>
</dbReference>
<dbReference type="Pfam" id="PF05000">
    <property type="entry name" value="RNA_pol_Rpb1_4"/>
    <property type="match status" value="1"/>
</dbReference>
<dbReference type="Pfam" id="PF04998">
    <property type="entry name" value="RNA_pol_Rpb1_5"/>
    <property type="match status" value="1"/>
</dbReference>
<dbReference type="SMART" id="SM00663">
    <property type="entry name" value="RPOLA_N"/>
    <property type="match status" value="1"/>
</dbReference>
<dbReference type="SUPFAM" id="SSF64484">
    <property type="entry name" value="beta and beta-prime subunits of DNA dependent RNA-polymerase"/>
    <property type="match status" value="1"/>
</dbReference>
<evidence type="ECO:0000255" key="1">
    <source>
        <dbReference type="HAMAP-Rule" id="MF_01322"/>
    </source>
</evidence>
<name>RPOC_ECODH</name>
<keyword id="KW-0007">Acetylation</keyword>
<keyword id="KW-0240">DNA-directed RNA polymerase</keyword>
<keyword id="KW-0460">Magnesium</keyword>
<keyword id="KW-0479">Metal-binding</keyword>
<keyword id="KW-0548">Nucleotidyltransferase</keyword>
<keyword id="KW-0804">Transcription</keyword>
<keyword id="KW-0808">Transferase</keyword>
<keyword id="KW-0862">Zinc</keyword>
<sequence>MKDLLKFLKAQTKTEEFDAIKIALASPDMIRSWSFGEVKKPETINYRTFKPERDGLFCARIFGPVKDYECLCGKYKRLKHRGVICEKCGVEVTQTKVRRERMGHIELASPTAHIWFLKSLPSRIGLLLDMPLRDIERVLYFESYVVIEGGMTNLERQQILTEEQYLDALEEFGDEFDAKMGAEAIQALLKSMDLEQECEQLREELNETNSETKRKKLTKRIKLLEAFVQSGNKPEWMILTVLPVLPPDLRPLVPLDGGRFATSDLNDLYRRVINRNNRLKRLLDLAAPDIIVRNEKRMLQEAVDALLDNGRRGRAITGSNKRPLKSLADMIKGKQGRFRQNLLGKRVDYSGRSVITVGPYLRLHQCGLPKKMALELFKPFIYGKLELRGLATTIKAAKKMVEREEAVVWDILDEVIREHPVLLNRAPTLHRLGIQAFEPVLIEGKAIQLHPLVCAAYNADFDGDQMAVHVPLTLEAQLEARALMMSTNNILSPANGEPIIVPSQDVVLGLYYMTRDCVNAKGEGMVLTGPKEAERLYRSGLASLHARVKVRITEYEKDANGELVAKTSLKDTTVGRAILWMIVPKGLPYSIVNQALGKKAISKMLNTCYRILGLKPTVIFADQIMYTGFAYAARSGASVGIDDMVIPEKKHEIISEAEAEVAEIQEQFQSGLVTAGERYNKVIDIWAAANDRVSKAMMDNLQTETVINRDGQEEKQVSFNSIYMMADSGARGSAAQIRQLAGMRGLMAKPDGSIIETPITANFREGLNVLQYFISTHGARKGLADTALKTANSGYLTRRLVDVAQDLVVTEDDCGTHEGIMMTPVIEGGDVKEPLRDRVLGRVTAEDVLKPGTADILVPRNTLLHEQWCDLLEENSVDAVKVRSVVSCDTDFGVCAHCYGRDLARGHIINKGEAIGVIAAQSIGEPGTQLTMRTFHIGGAASRAAAESSIQVKNKGSIKLSNVKSVVNSSGKLVITSRNTELKLIDEFGRTKESYKVPYGAVLAKGDGEQVAGGETVANWDPHTMPVITEVSGFVRFTDMIDGQTITRQTDELTGLSSLVVLDSAERTAGGKDLRPALKIVDAQGNDVLIPGTDMPAQYFLPGKAIVQLEDGVQISSGDTLARIPQESGGTKDITGGLPRVADLFEARRPKEPAILAEISGIVSFGKETKGKRRLVITPVDGSDPYEEMIPKWRQLNVFEGERVERGDVISDGPEAPHDILRLRGVHAVTRYIVNEVQDVYRLQGVKINDKHIEVIVRQMLRKATIVNAGSSDFLEGEQVEYSRVKIANRELEANGKVGATYSRDLLGITKASLATESFISAASFQETTRVLTEAAVAGKRDELRGLKENVIVGRLIPAGTGYAYHQDRMRRRAAGEAPAAPQVTAEDASASLAELLNAGLGGSDNE</sequence>
<reference key="1">
    <citation type="journal article" date="2008" name="J. Bacteriol.">
        <title>The complete genome sequence of Escherichia coli DH10B: insights into the biology of a laboratory workhorse.</title>
        <authorList>
            <person name="Durfee T."/>
            <person name="Nelson R."/>
            <person name="Baldwin S."/>
            <person name="Plunkett G. III"/>
            <person name="Burland V."/>
            <person name="Mau B."/>
            <person name="Petrosino J.F."/>
            <person name="Qin X."/>
            <person name="Muzny D.M."/>
            <person name="Ayele M."/>
            <person name="Gibbs R.A."/>
            <person name="Csorgo B."/>
            <person name="Posfai G."/>
            <person name="Weinstock G.M."/>
            <person name="Blattner F.R."/>
        </authorList>
    </citation>
    <scope>NUCLEOTIDE SEQUENCE [LARGE SCALE GENOMIC DNA]</scope>
    <source>
        <strain>K12 / DH10B</strain>
    </source>
</reference>
<proteinExistence type="inferred from homology"/>
<comment type="function">
    <text evidence="1">DNA-dependent RNA polymerase catalyzes the transcription of DNA into RNA using the four ribonucleoside triphosphates as substrates.</text>
</comment>
<comment type="catalytic activity">
    <reaction evidence="1">
        <text>RNA(n) + a ribonucleoside 5'-triphosphate = RNA(n+1) + diphosphate</text>
        <dbReference type="Rhea" id="RHEA:21248"/>
        <dbReference type="Rhea" id="RHEA-COMP:14527"/>
        <dbReference type="Rhea" id="RHEA-COMP:17342"/>
        <dbReference type="ChEBI" id="CHEBI:33019"/>
        <dbReference type="ChEBI" id="CHEBI:61557"/>
        <dbReference type="ChEBI" id="CHEBI:140395"/>
        <dbReference type="EC" id="2.7.7.6"/>
    </reaction>
</comment>
<comment type="cofactor">
    <cofactor evidence="1">
        <name>Mg(2+)</name>
        <dbReference type="ChEBI" id="CHEBI:18420"/>
    </cofactor>
    <text evidence="1">Binds 1 Mg(2+) ion per subunit.</text>
</comment>
<comment type="cofactor">
    <cofactor evidence="1">
        <name>Zn(2+)</name>
        <dbReference type="ChEBI" id="CHEBI:29105"/>
    </cofactor>
    <text evidence="1">Binds 2 Zn(2+) ions per subunit.</text>
</comment>
<comment type="subunit">
    <text evidence="1">The RNAP catalytic core consists of 2 alpha, 1 beta, 1 beta' and 1 omega subunit. When a sigma factor is associated with the core the holoenzyme is formed, which can initiate transcription.</text>
</comment>
<comment type="similarity">
    <text evidence="1">Belongs to the RNA polymerase beta' chain family.</text>
</comment>
<organism>
    <name type="scientific">Escherichia coli (strain K12 / DH10B)</name>
    <dbReference type="NCBI Taxonomy" id="316385"/>
    <lineage>
        <taxon>Bacteria</taxon>
        <taxon>Pseudomonadati</taxon>
        <taxon>Pseudomonadota</taxon>
        <taxon>Gammaproteobacteria</taxon>
        <taxon>Enterobacterales</taxon>
        <taxon>Enterobacteriaceae</taxon>
        <taxon>Escherichia</taxon>
    </lineage>
</organism>
<feature type="chain" id="PRO_0000353356" description="DNA-directed RNA polymerase subunit beta'">
    <location>
        <begin position="1"/>
        <end position="1407"/>
    </location>
</feature>
<feature type="binding site" evidence="1">
    <location>
        <position position="70"/>
    </location>
    <ligand>
        <name>Zn(2+)</name>
        <dbReference type="ChEBI" id="CHEBI:29105"/>
        <label>1</label>
    </ligand>
</feature>
<feature type="binding site" evidence="1">
    <location>
        <position position="72"/>
    </location>
    <ligand>
        <name>Zn(2+)</name>
        <dbReference type="ChEBI" id="CHEBI:29105"/>
        <label>1</label>
    </ligand>
</feature>
<feature type="binding site" evidence="1">
    <location>
        <position position="85"/>
    </location>
    <ligand>
        <name>Zn(2+)</name>
        <dbReference type="ChEBI" id="CHEBI:29105"/>
        <label>1</label>
    </ligand>
</feature>
<feature type="binding site" evidence="1">
    <location>
        <position position="88"/>
    </location>
    <ligand>
        <name>Zn(2+)</name>
        <dbReference type="ChEBI" id="CHEBI:29105"/>
        <label>1</label>
    </ligand>
</feature>
<feature type="binding site" evidence="1">
    <location>
        <position position="460"/>
    </location>
    <ligand>
        <name>Mg(2+)</name>
        <dbReference type="ChEBI" id="CHEBI:18420"/>
    </ligand>
</feature>
<feature type="binding site" evidence="1">
    <location>
        <position position="462"/>
    </location>
    <ligand>
        <name>Mg(2+)</name>
        <dbReference type="ChEBI" id="CHEBI:18420"/>
    </ligand>
</feature>
<feature type="binding site" evidence="1">
    <location>
        <position position="464"/>
    </location>
    <ligand>
        <name>Mg(2+)</name>
        <dbReference type="ChEBI" id="CHEBI:18420"/>
    </ligand>
</feature>
<feature type="binding site" evidence="1">
    <location>
        <position position="814"/>
    </location>
    <ligand>
        <name>Zn(2+)</name>
        <dbReference type="ChEBI" id="CHEBI:29105"/>
        <label>2</label>
    </ligand>
</feature>
<feature type="binding site" evidence="1">
    <location>
        <position position="888"/>
    </location>
    <ligand>
        <name>Zn(2+)</name>
        <dbReference type="ChEBI" id="CHEBI:29105"/>
        <label>2</label>
    </ligand>
</feature>
<feature type="binding site" evidence="1">
    <location>
        <position position="895"/>
    </location>
    <ligand>
        <name>Zn(2+)</name>
        <dbReference type="ChEBI" id="CHEBI:29105"/>
        <label>2</label>
    </ligand>
</feature>
<feature type="binding site" evidence="1">
    <location>
        <position position="898"/>
    </location>
    <ligand>
        <name>Zn(2+)</name>
        <dbReference type="ChEBI" id="CHEBI:29105"/>
        <label>2</label>
    </ligand>
</feature>
<feature type="modified residue" description="N6-acetyllysine" evidence="1">
    <location>
        <position position="972"/>
    </location>
</feature>
<protein>
    <recommendedName>
        <fullName evidence="1">DNA-directed RNA polymerase subunit beta'</fullName>
        <shortName evidence="1">RNAP subunit beta'</shortName>
        <ecNumber evidence="1">2.7.7.6</ecNumber>
    </recommendedName>
    <alternativeName>
        <fullName evidence="1">RNA polymerase subunit beta'</fullName>
    </alternativeName>
    <alternativeName>
        <fullName evidence="1">Transcriptase subunit beta'</fullName>
    </alternativeName>
</protein>
<accession>B1XBZ0</accession>
<gene>
    <name evidence="1" type="primary">rpoC</name>
    <name type="ordered locus">ECDH10B_4176</name>
</gene>